<dbReference type="EMBL" id="GG704915">
    <property type="protein sequence ID" value="EAS27565.3"/>
    <property type="molecule type" value="Genomic_DNA"/>
</dbReference>
<dbReference type="RefSeq" id="XP_001239148.1">
    <property type="nucleotide sequence ID" value="XM_001239147.2"/>
</dbReference>
<dbReference type="FunCoup" id="Q1DHP3">
    <property type="interactions" value="92"/>
</dbReference>
<dbReference type="STRING" id="246410.Q1DHP3"/>
<dbReference type="GeneID" id="4558213"/>
<dbReference type="KEGG" id="cim:CIMG_10170"/>
<dbReference type="VEuPathDB" id="FungiDB:CIMG_10170"/>
<dbReference type="InParanoid" id="Q1DHP3"/>
<dbReference type="OMA" id="YKSPYDL"/>
<dbReference type="OrthoDB" id="8918678at2759"/>
<dbReference type="Proteomes" id="UP000001261">
    <property type="component" value="Unassembled WGS sequence"/>
</dbReference>
<dbReference type="GO" id="GO:0070971">
    <property type="term" value="C:endoplasmic reticulum exit site"/>
    <property type="evidence" value="ECO:0007669"/>
    <property type="project" value="UniProtKB-ARBA"/>
</dbReference>
<dbReference type="GO" id="GO:0005789">
    <property type="term" value="C:endoplasmic reticulum membrane"/>
    <property type="evidence" value="ECO:0007669"/>
    <property type="project" value="UniProtKB-SubCell"/>
</dbReference>
<dbReference type="GO" id="GO:0012507">
    <property type="term" value="C:ER to Golgi transport vesicle membrane"/>
    <property type="evidence" value="ECO:0007669"/>
    <property type="project" value="TreeGrafter"/>
</dbReference>
<dbReference type="GO" id="GO:0006914">
    <property type="term" value="P:autophagy"/>
    <property type="evidence" value="ECO:0007669"/>
    <property type="project" value="UniProtKB-KW"/>
</dbReference>
<dbReference type="GO" id="GO:0007030">
    <property type="term" value="P:Golgi organization"/>
    <property type="evidence" value="ECO:0007669"/>
    <property type="project" value="TreeGrafter"/>
</dbReference>
<dbReference type="GO" id="GO:0046907">
    <property type="term" value="P:intracellular transport"/>
    <property type="evidence" value="ECO:0007669"/>
    <property type="project" value="UniProtKB-ARBA"/>
</dbReference>
<dbReference type="GO" id="GO:0070973">
    <property type="term" value="P:protein localization to endoplasmic reticulum exit site"/>
    <property type="evidence" value="ECO:0007669"/>
    <property type="project" value="TreeGrafter"/>
</dbReference>
<dbReference type="GO" id="GO:0015031">
    <property type="term" value="P:protein transport"/>
    <property type="evidence" value="ECO:0007669"/>
    <property type="project" value="UniProtKB-KW"/>
</dbReference>
<dbReference type="GO" id="GO:0016192">
    <property type="term" value="P:vesicle-mediated transport"/>
    <property type="evidence" value="ECO:0007669"/>
    <property type="project" value="UniProtKB-KW"/>
</dbReference>
<dbReference type="CDD" id="cd09233">
    <property type="entry name" value="ACE1-Sec16-like"/>
    <property type="match status" value="1"/>
</dbReference>
<dbReference type="FunFam" id="1.25.40.1030:FF:000008">
    <property type="entry name" value="Protein transport protein sec16"/>
    <property type="match status" value="1"/>
</dbReference>
<dbReference type="Gene3D" id="1.25.40.1030">
    <property type="match status" value="1"/>
</dbReference>
<dbReference type="InterPro" id="IPR024340">
    <property type="entry name" value="Sec16_CCD"/>
</dbReference>
<dbReference type="InterPro" id="IPR024468">
    <property type="entry name" value="Sec16_N"/>
</dbReference>
<dbReference type="InterPro" id="IPR024298">
    <property type="entry name" value="Sec16_Sec23-bd"/>
</dbReference>
<dbReference type="PANTHER" id="PTHR13402">
    <property type="entry name" value="RGPR-RELATED"/>
    <property type="match status" value="1"/>
</dbReference>
<dbReference type="PANTHER" id="PTHR13402:SF6">
    <property type="entry name" value="SECRETORY 16, ISOFORM I"/>
    <property type="match status" value="1"/>
</dbReference>
<dbReference type="Pfam" id="PF12932">
    <property type="entry name" value="Sec16"/>
    <property type="match status" value="1"/>
</dbReference>
<dbReference type="Pfam" id="PF12935">
    <property type="entry name" value="Sec16_N"/>
    <property type="match status" value="1"/>
</dbReference>
<dbReference type="Pfam" id="PF12931">
    <property type="entry name" value="TPR_Sec16"/>
    <property type="match status" value="1"/>
</dbReference>
<keyword id="KW-0072">Autophagy</keyword>
<keyword id="KW-0256">Endoplasmic reticulum</keyword>
<keyword id="KW-0931">ER-Golgi transport</keyword>
<keyword id="KW-0472">Membrane</keyword>
<keyword id="KW-0653">Protein transport</keyword>
<keyword id="KW-1185">Reference proteome</keyword>
<keyword id="KW-0813">Transport</keyword>
<reference key="1">
    <citation type="journal article" date="2009" name="Genome Res.">
        <title>Comparative genomic analyses of the human fungal pathogens Coccidioides and their relatives.</title>
        <authorList>
            <person name="Sharpton T.J."/>
            <person name="Stajich J.E."/>
            <person name="Rounsley S.D."/>
            <person name="Gardner M.J."/>
            <person name="Wortman J.R."/>
            <person name="Jordar V.S."/>
            <person name="Maiti R."/>
            <person name="Kodira C.D."/>
            <person name="Neafsey D.E."/>
            <person name="Zeng Q."/>
            <person name="Hung C.-Y."/>
            <person name="McMahan C."/>
            <person name="Muszewska A."/>
            <person name="Grynberg M."/>
            <person name="Mandel M.A."/>
            <person name="Kellner E.M."/>
            <person name="Barker B.M."/>
            <person name="Galgiani J.N."/>
            <person name="Orbach M.J."/>
            <person name="Kirkland T.N."/>
            <person name="Cole G.T."/>
            <person name="Henn M.R."/>
            <person name="Birren B.W."/>
            <person name="Taylor J.W."/>
        </authorList>
    </citation>
    <scope>NUCLEOTIDE SEQUENCE [LARGE SCALE GENOMIC DNA]</scope>
    <source>
        <strain>RS</strain>
    </source>
</reference>
<reference key="2">
    <citation type="journal article" date="2010" name="Genome Res.">
        <title>Population genomic sequencing of Coccidioides fungi reveals recent hybridization and transposon control.</title>
        <authorList>
            <person name="Neafsey D.E."/>
            <person name="Barker B.M."/>
            <person name="Sharpton T.J."/>
            <person name="Stajich J.E."/>
            <person name="Park D.J."/>
            <person name="Whiston E."/>
            <person name="Hung C.-Y."/>
            <person name="McMahan C."/>
            <person name="White J."/>
            <person name="Sykes S."/>
            <person name="Heiman D."/>
            <person name="Young S."/>
            <person name="Zeng Q."/>
            <person name="Abouelleil A."/>
            <person name="Aftuck L."/>
            <person name="Bessette D."/>
            <person name="Brown A."/>
            <person name="FitzGerald M."/>
            <person name="Lui A."/>
            <person name="Macdonald J.P."/>
            <person name="Priest M."/>
            <person name="Orbach M.J."/>
            <person name="Galgiani J.N."/>
            <person name="Kirkland T.N."/>
            <person name="Cole G.T."/>
            <person name="Birren B.W."/>
            <person name="Henn M.R."/>
            <person name="Taylor J.W."/>
            <person name="Rounsley S.D."/>
        </authorList>
    </citation>
    <scope>GENOME REANNOTATION</scope>
    <source>
        <strain>RS</strain>
    </source>
</reference>
<organism>
    <name type="scientific">Coccidioides immitis (strain RS)</name>
    <name type="common">Valley fever fungus</name>
    <dbReference type="NCBI Taxonomy" id="246410"/>
    <lineage>
        <taxon>Eukaryota</taxon>
        <taxon>Fungi</taxon>
        <taxon>Dikarya</taxon>
        <taxon>Ascomycota</taxon>
        <taxon>Pezizomycotina</taxon>
        <taxon>Eurotiomycetes</taxon>
        <taxon>Eurotiomycetidae</taxon>
        <taxon>Onygenales</taxon>
        <taxon>Onygenaceae</taxon>
        <taxon>Coccidioides</taxon>
    </lineage>
</organism>
<name>SEC16_COCIM</name>
<protein>
    <recommendedName>
        <fullName>COPII coat assembly protein SEC16</fullName>
    </recommendedName>
    <alternativeName>
        <fullName>Protein transport protein SEC16</fullName>
    </alternativeName>
</protein>
<gene>
    <name type="primary">SEC16</name>
    <name type="ORF">CIMG_10170</name>
</gene>
<sequence length="1717" mass="184836">MAEDRVLGHESGLFTDAIHLGAWNPAHRPEDFSDSVLHEVATQTSVPIQTPDLAPCPPTEFELEHRDPEASPPDNVLDETKDVEYLQAFPEAPTRLENSGHVDITGSEYMQSIEKTREGAVIDSNNGSPFIDSFKGSDDDTGTNTFPDDNIDFQAMIGQTHDDTRDVWDRSTDAHVEDLSTQLVTEPYSAENDKVNSWNSVFADDEGGGDFFSQISSQSKPTVAHLESEPRSDDMASHLSNGNVQPSNESQQTKAIDSLFQEDESTGEADFFNSQGPAHVEPSLELLSETQPNSMPEDHPLPSLDPGKELPHHQSVAVVQDEKPEVIRPAEPGVAENLGEEELAERWKAFLGDDDILIENETLDGSIEGANTHTAEYQRHPVQPASQVGSEQPPVNTYTPHQPSSSEMLGGLPAAGYSSTLGNLTNPEKSKVESFSNQSKAGYQSPYDLPFDMRPKHAPPRKIAPPVGVNPPPRSSSMSGSRPPSSSYMVPGPNFSPVAAPPPVSGPDTTPPSTKEPVRTGSFFEELPVVSRSRPSTRGRYTPQPNMSQPASNLPMAPVAPPPSLPQQSSDPYSQFQLQPPARLDPYSNLSAPPPQPAPTTSRYSPQPPPPGTKPAPFPRYSPAPPQSACMTSSATYVSQSPTVQSSVNALPFQPRTSSPLAQHETAKSYPSPPRKRGSLPVTSIIPTSSVPQFGSDSQIVPPKRSMTQSPGRMMPLQSSVASNQNAYVRPASAHGSKSSIQAPLLQSAYAPAANNRPTQALDFVVPTDGQEHDPLERWKGAPIFKFGFGGTLLSTFPKHIPRYATGQMTPRIKPTLGDIKTCPISQILPHNEPLDKFPGPLKSKSKKKDVLTWLSTMISALEGAPSTTDGHVDPVHQHRREDGILLWKVVRVLVEHDGALRGSTAAEASLQSIFSPGSMAMNSQFEYPSTGDSVSGSLKSESASSLGIDVIHKSLVAGDRQKAVWDAVDHRLWGHAMLISSTLDKSVWKQVTQEFIRREVRSLGKNTESLAALYEIFAGNFEESIDELVPPSARAGLQMVSVHAGTGAPKDALEGLNKWRDTVNLILQNKIAQDHQALRALGRLLASYGRVEASHICSLVAGTAAGPIFGDARDPQASIVLLGADHWRNPTTFMVEREACLLTEVYEFATSVLAASPSPSLAHLQAFKLRHAMYLAEEGHKSEAQQYCEAIVSIVTSKSNVKSPYYHQRFFAELDELSHRLRQAPTDGSSSWISKPSMEKVSGSMWAKFNSFVSGDDNEVTSNGSGKGGDGDIGPFAKIAGTPPISRSPSVAEGHGSYFPSQPVAPSSSGSRYAPNSQYYAPYSSPEQSRGRRSLDAQRSPPQTAGRSYSQRRNSQDPSTPLEGNAYGSMPNHIYASPATIGSHITPPQASHAPLAPVEEIYSPQIQSPTSEMPAIQTLPDGFGINQTGYMPLAEQVTRDDETNLKTTTTEQSGYQPPTYEPPSFSTGYEPPSYSANVEDNEHSDEEKPKKKSFMDDDDDDFMARAAQLRASEKEKMDREAAEAFRKAAEADAKRPLATEKKGWFSGWFGKKESGGAVRADLGDENSFYFDKELNRWVNKKDPGSAATAAVTPPPPKSSAPSSQSVSTSQTPTTPNLTNGRPGPSAVPGGTLSAPPPGIAPLPTPPSSSLGPPSDSPRAIPRSVSAGAPTGPPSRPGTSLSNASSIDDLLGAPQARKGGTMKTRRKGRGYVDVMAK</sequence>
<comment type="function">
    <text evidence="1">Involved in the initiation of assembly of the COPII coat required for the formation of transport vesicles from the endoplasmic reticulum (ER) and the selection of cargo molecules. Also involved in autophagy (By similarity).</text>
</comment>
<comment type="subcellular location">
    <subcellularLocation>
        <location evidence="1">Endoplasmic reticulum membrane</location>
        <topology evidence="1">Peripheral membrane protein</topology>
        <orientation evidence="1">Cytoplasmic side</orientation>
    </subcellularLocation>
</comment>
<comment type="similarity">
    <text evidence="3">Belongs to the SEC16 family.</text>
</comment>
<feature type="chain" id="PRO_0000295535" description="COPII coat assembly protein SEC16">
    <location>
        <begin position="1"/>
        <end position="1717"/>
    </location>
</feature>
<feature type="region of interest" description="Disordered" evidence="2">
    <location>
        <begin position="209"/>
        <end position="253"/>
    </location>
</feature>
<feature type="region of interest" description="Disordered" evidence="2">
    <location>
        <begin position="290"/>
        <end position="339"/>
    </location>
</feature>
<feature type="region of interest" description="Disordered" evidence="2">
    <location>
        <begin position="382"/>
        <end position="722"/>
    </location>
</feature>
<feature type="region of interest" description="Disordered" evidence="2">
    <location>
        <begin position="1260"/>
        <end position="1505"/>
    </location>
</feature>
<feature type="region of interest" description="Disordered" evidence="2">
    <location>
        <begin position="1529"/>
        <end position="1564"/>
    </location>
</feature>
<feature type="region of interest" description="Disordered" evidence="2">
    <location>
        <begin position="1582"/>
        <end position="1717"/>
    </location>
</feature>
<feature type="compositionally biased region" description="Basic and acidic residues" evidence="2">
    <location>
        <begin position="226"/>
        <end position="236"/>
    </location>
</feature>
<feature type="compositionally biased region" description="Polar residues" evidence="2">
    <location>
        <begin position="238"/>
        <end position="253"/>
    </location>
</feature>
<feature type="compositionally biased region" description="Basic and acidic residues" evidence="2">
    <location>
        <begin position="296"/>
        <end position="312"/>
    </location>
</feature>
<feature type="compositionally biased region" description="Polar residues" evidence="2">
    <location>
        <begin position="384"/>
        <end position="407"/>
    </location>
</feature>
<feature type="compositionally biased region" description="Polar residues" evidence="2">
    <location>
        <begin position="417"/>
        <end position="442"/>
    </location>
</feature>
<feature type="compositionally biased region" description="Low complexity" evidence="2">
    <location>
        <begin position="475"/>
        <end position="498"/>
    </location>
</feature>
<feature type="compositionally biased region" description="Pro residues" evidence="2">
    <location>
        <begin position="606"/>
        <end position="626"/>
    </location>
</feature>
<feature type="compositionally biased region" description="Polar residues" evidence="2">
    <location>
        <begin position="629"/>
        <end position="661"/>
    </location>
</feature>
<feature type="compositionally biased region" description="Polar residues" evidence="2">
    <location>
        <begin position="681"/>
        <end position="699"/>
    </location>
</feature>
<feature type="compositionally biased region" description="Polar residues" evidence="2">
    <location>
        <begin position="706"/>
        <end position="722"/>
    </location>
</feature>
<feature type="compositionally biased region" description="Polar residues" evidence="2">
    <location>
        <begin position="1305"/>
        <end position="1320"/>
    </location>
</feature>
<feature type="compositionally biased region" description="Polar residues" evidence="2">
    <location>
        <begin position="1341"/>
        <end position="1360"/>
    </location>
</feature>
<feature type="compositionally biased region" description="Polar residues" evidence="2">
    <location>
        <begin position="1446"/>
        <end position="1457"/>
    </location>
</feature>
<feature type="compositionally biased region" description="Basic and acidic residues" evidence="2">
    <location>
        <begin position="1486"/>
        <end position="1496"/>
    </location>
</feature>
<feature type="compositionally biased region" description="Basic and acidic residues" evidence="2">
    <location>
        <begin position="1529"/>
        <end position="1544"/>
    </location>
</feature>
<feature type="compositionally biased region" description="Low complexity" evidence="2">
    <location>
        <begin position="1600"/>
        <end position="1616"/>
    </location>
</feature>
<feature type="compositionally biased region" description="Pro residues" evidence="2">
    <location>
        <begin position="1635"/>
        <end position="1647"/>
    </location>
</feature>
<feature type="compositionally biased region" description="Low complexity" evidence="2">
    <location>
        <begin position="1648"/>
        <end position="1658"/>
    </location>
</feature>
<feature type="compositionally biased region" description="Polar residues" evidence="2">
    <location>
        <begin position="1677"/>
        <end position="1686"/>
    </location>
</feature>
<evidence type="ECO:0000250" key="1"/>
<evidence type="ECO:0000256" key="2">
    <source>
        <dbReference type="SAM" id="MobiDB-lite"/>
    </source>
</evidence>
<evidence type="ECO:0000305" key="3"/>
<proteinExistence type="inferred from homology"/>
<accession>Q1DHP3</accession>
<accession>J0HH29</accession>